<gene>
    <name evidence="1" type="primary">lipB</name>
    <name type="ordered locus">BARBAKC583_0898</name>
</gene>
<protein>
    <recommendedName>
        <fullName evidence="1">Octanoyltransferase</fullName>
        <ecNumber evidence="1">2.3.1.181</ecNumber>
    </recommendedName>
    <alternativeName>
        <fullName evidence="1">Lipoate-protein ligase B</fullName>
    </alternativeName>
    <alternativeName>
        <fullName evidence="1">Lipoyl/octanoyl transferase</fullName>
    </alternativeName>
    <alternativeName>
        <fullName evidence="1">Octanoyl-[acyl-carrier-protein]-protein N-octanoyltransferase</fullName>
    </alternativeName>
</protein>
<comment type="function">
    <text evidence="1">Catalyzes the transfer of endogenously produced octanoic acid from octanoyl-acyl-carrier-protein onto the lipoyl domains of lipoate-dependent enzymes. Lipoyl-ACP can also act as a substrate although octanoyl-ACP is likely to be the physiological substrate.</text>
</comment>
<comment type="catalytic activity">
    <reaction evidence="1">
        <text>octanoyl-[ACP] + L-lysyl-[protein] = N(6)-octanoyl-L-lysyl-[protein] + holo-[ACP] + H(+)</text>
        <dbReference type="Rhea" id="RHEA:17665"/>
        <dbReference type="Rhea" id="RHEA-COMP:9636"/>
        <dbReference type="Rhea" id="RHEA-COMP:9685"/>
        <dbReference type="Rhea" id="RHEA-COMP:9752"/>
        <dbReference type="Rhea" id="RHEA-COMP:9928"/>
        <dbReference type="ChEBI" id="CHEBI:15378"/>
        <dbReference type="ChEBI" id="CHEBI:29969"/>
        <dbReference type="ChEBI" id="CHEBI:64479"/>
        <dbReference type="ChEBI" id="CHEBI:78463"/>
        <dbReference type="ChEBI" id="CHEBI:78809"/>
        <dbReference type="EC" id="2.3.1.181"/>
    </reaction>
</comment>
<comment type="pathway">
    <text evidence="1">Protein modification; protein lipoylation via endogenous pathway; protein N(6)-(lipoyl)lysine from octanoyl-[acyl-carrier-protein]: step 1/2.</text>
</comment>
<comment type="subcellular location">
    <subcellularLocation>
        <location evidence="1">Cytoplasm</location>
    </subcellularLocation>
</comment>
<comment type="miscellaneous">
    <text evidence="1">In the reaction, the free carboxyl group of octanoic acid is attached via an amide linkage to the epsilon-amino group of a specific lysine residue of lipoyl domains of lipoate-dependent enzymes.</text>
</comment>
<comment type="similarity">
    <text evidence="1">Belongs to the LipB family.</text>
</comment>
<dbReference type="EC" id="2.3.1.181" evidence="1"/>
<dbReference type="EMBL" id="CP000524">
    <property type="protein sequence ID" value="ABM45682.1"/>
    <property type="molecule type" value="Genomic_DNA"/>
</dbReference>
<dbReference type="RefSeq" id="WP_005767322.1">
    <property type="nucleotide sequence ID" value="NC_008783.1"/>
</dbReference>
<dbReference type="SMR" id="A1UT80"/>
<dbReference type="STRING" id="360095.BARBAKC583_0898"/>
<dbReference type="GeneID" id="4684821"/>
<dbReference type="KEGG" id="bbk:BARBAKC583_0898"/>
<dbReference type="PATRIC" id="fig|360095.6.peg.874"/>
<dbReference type="eggNOG" id="COG0321">
    <property type="taxonomic scope" value="Bacteria"/>
</dbReference>
<dbReference type="HOGENOM" id="CLU_035168_3_0_5"/>
<dbReference type="OrthoDB" id="9787061at2"/>
<dbReference type="UniPathway" id="UPA00538">
    <property type="reaction ID" value="UER00592"/>
</dbReference>
<dbReference type="Proteomes" id="UP000000643">
    <property type="component" value="Chromosome"/>
</dbReference>
<dbReference type="GO" id="GO:0005737">
    <property type="term" value="C:cytoplasm"/>
    <property type="evidence" value="ECO:0007669"/>
    <property type="project" value="UniProtKB-SubCell"/>
</dbReference>
<dbReference type="GO" id="GO:0033819">
    <property type="term" value="F:lipoyl(octanoyl) transferase activity"/>
    <property type="evidence" value="ECO:0007669"/>
    <property type="project" value="UniProtKB-EC"/>
</dbReference>
<dbReference type="GO" id="GO:0036211">
    <property type="term" value="P:protein modification process"/>
    <property type="evidence" value="ECO:0007669"/>
    <property type="project" value="InterPro"/>
</dbReference>
<dbReference type="CDD" id="cd16444">
    <property type="entry name" value="LipB"/>
    <property type="match status" value="1"/>
</dbReference>
<dbReference type="Gene3D" id="3.30.930.10">
    <property type="entry name" value="Bira Bifunctional Protein, Domain 2"/>
    <property type="match status" value="1"/>
</dbReference>
<dbReference type="HAMAP" id="MF_00013">
    <property type="entry name" value="LipB"/>
    <property type="match status" value="1"/>
</dbReference>
<dbReference type="InterPro" id="IPR045864">
    <property type="entry name" value="aa-tRNA-synth_II/BPL/LPL"/>
</dbReference>
<dbReference type="InterPro" id="IPR004143">
    <property type="entry name" value="BPL_LPL_catalytic"/>
</dbReference>
<dbReference type="InterPro" id="IPR000544">
    <property type="entry name" value="Octanoyltransferase"/>
</dbReference>
<dbReference type="InterPro" id="IPR020605">
    <property type="entry name" value="Octanoyltransferase_CS"/>
</dbReference>
<dbReference type="NCBIfam" id="TIGR00214">
    <property type="entry name" value="lipB"/>
    <property type="match status" value="1"/>
</dbReference>
<dbReference type="NCBIfam" id="NF010921">
    <property type="entry name" value="PRK14341.1"/>
    <property type="match status" value="1"/>
</dbReference>
<dbReference type="NCBIfam" id="NF010925">
    <property type="entry name" value="PRK14345.1"/>
    <property type="match status" value="1"/>
</dbReference>
<dbReference type="PANTHER" id="PTHR10993:SF7">
    <property type="entry name" value="LIPOYLTRANSFERASE 2, MITOCHONDRIAL-RELATED"/>
    <property type="match status" value="1"/>
</dbReference>
<dbReference type="PANTHER" id="PTHR10993">
    <property type="entry name" value="OCTANOYLTRANSFERASE"/>
    <property type="match status" value="1"/>
</dbReference>
<dbReference type="Pfam" id="PF21948">
    <property type="entry name" value="LplA-B_cat"/>
    <property type="match status" value="1"/>
</dbReference>
<dbReference type="PIRSF" id="PIRSF016262">
    <property type="entry name" value="LPLase"/>
    <property type="match status" value="1"/>
</dbReference>
<dbReference type="SUPFAM" id="SSF55681">
    <property type="entry name" value="Class II aaRS and biotin synthetases"/>
    <property type="match status" value="1"/>
</dbReference>
<dbReference type="PROSITE" id="PS51733">
    <property type="entry name" value="BPL_LPL_CATALYTIC"/>
    <property type="match status" value="1"/>
</dbReference>
<dbReference type="PROSITE" id="PS01313">
    <property type="entry name" value="LIPB"/>
    <property type="match status" value="1"/>
</dbReference>
<evidence type="ECO:0000255" key="1">
    <source>
        <dbReference type="HAMAP-Rule" id="MF_00013"/>
    </source>
</evidence>
<evidence type="ECO:0000255" key="2">
    <source>
        <dbReference type="PROSITE-ProRule" id="PRU01067"/>
    </source>
</evidence>
<proteinExistence type="inferred from homology"/>
<reference key="1">
    <citation type="submission" date="2006-12" db="EMBL/GenBank/DDBJ databases">
        <authorList>
            <person name="Hendrix L."/>
            <person name="Mohamoud Y."/>
            <person name="Radune D."/>
            <person name="Shvartsbeyn A."/>
            <person name="Daugherty S."/>
            <person name="Dodson R."/>
            <person name="Durkin A.S."/>
            <person name="Harkins D."/>
            <person name="Huot H."/>
            <person name="Kothari S.P."/>
            <person name="Madupu R."/>
            <person name="Li J."/>
            <person name="Nelson W.C."/>
            <person name="Shrivastava S."/>
            <person name="Giglio M.G."/>
            <person name="Haft D."/>
            <person name="Selengut J."/>
            <person name="Fraser-Ligget C."/>
            <person name="Seshadri R."/>
        </authorList>
    </citation>
    <scope>NUCLEOTIDE SEQUENCE [LARGE SCALE GENOMIC DNA]</scope>
    <source>
        <strain>ATCC 35685 / KC583 / Herrer 020/F12,63</strain>
    </source>
</reference>
<keyword id="KW-0012">Acyltransferase</keyword>
<keyword id="KW-0963">Cytoplasm</keyword>
<keyword id="KW-0808">Transferase</keyword>
<organism>
    <name type="scientific">Bartonella bacilliformis (strain ATCC 35685 / KC583 / Herrer 020/F12,63)</name>
    <dbReference type="NCBI Taxonomy" id="360095"/>
    <lineage>
        <taxon>Bacteria</taxon>
        <taxon>Pseudomonadati</taxon>
        <taxon>Pseudomonadota</taxon>
        <taxon>Alphaproteobacteria</taxon>
        <taxon>Hyphomicrobiales</taxon>
        <taxon>Bartonellaceae</taxon>
        <taxon>Bartonella</taxon>
    </lineage>
</organism>
<accession>A1UT80</accession>
<sequence>MQHTSRDHLSYNFKTTAPHPPVEWKISDGLVEYPEALRYMQKRVENIYAKIAHEQVWLLEHPSLYTAGTSANKNDLLIPHVFPVYEAGRGGEFTYHGPGQRIAYIMLDLKRRKQDIRAFISALEQWIIQTLAQFNIKGERREDRIGVWVVRPDRPSIISGIPAEDKIAAIGIRVRKWISFHGISINVDTDLTHYSGIVPCGITNHGVTSLLDLGLPITIHDVDNALKKAFEQIFGPTIDVS</sequence>
<name>LIPB_BARBK</name>
<feature type="chain" id="PRO_1000057101" description="Octanoyltransferase">
    <location>
        <begin position="1"/>
        <end position="241"/>
    </location>
</feature>
<feature type="domain" description="BPL/LPL catalytic" evidence="2">
    <location>
        <begin position="50"/>
        <end position="238"/>
    </location>
</feature>
<feature type="active site" description="Acyl-thioester intermediate" evidence="1">
    <location>
        <position position="200"/>
    </location>
</feature>
<feature type="binding site" evidence="1">
    <location>
        <begin position="89"/>
        <end position="96"/>
    </location>
    <ligand>
        <name>substrate</name>
    </ligand>
</feature>
<feature type="binding site" evidence="1">
    <location>
        <begin position="169"/>
        <end position="171"/>
    </location>
    <ligand>
        <name>substrate</name>
    </ligand>
</feature>
<feature type="binding site" evidence="1">
    <location>
        <begin position="182"/>
        <end position="184"/>
    </location>
    <ligand>
        <name>substrate</name>
    </ligand>
</feature>
<feature type="site" description="Lowers pKa of active site Cys" evidence="1">
    <location>
        <position position="166"/>
    </location>
</feature>